<organism>
    <name type="scientific">Saccharomyces cerevisiae (strain ATCC 204508 / S288c)</name>
    <name type="common">Baker's yeast</name>
    <dbReference type="NCBI Taxonomy" id="559292"/>
    <lineage>
        <taxon>Eukaryota</taxon>
        <taxon>Fungi</taxon>
        <taxon>Dikarya</taxon>
        <taxon>Ascomycota</taxon>
        <taxon>Saccharomycotina</taxon>
        <taxon>Saccharomycetes</taxon>
        <taxon>Saccharomycetales</taxon>
        <taxon>Saccharomycetaceae</taxon>
        <taxon>Saccharomyces</taxon>
    </lineage>
</organism>
<reference key="1">
    <citation type="journal article" date="1995" name="Yeast">
        <title>The sequence of a 44 420 bp fragment located on the left arm of chromosome XIV from Saccharomyces cerevisiae.</title>
        <authorList>
            <person name="Bergez P."/>
            <person name="Doignon F."/>
            <person name="Crouzet M."/>
        </authorList>
    </citation>
    <scope>NUCLEOTIDE SEQUENCE [GENOMIC DNA]</scope>
    <source>
        <strain>S288c / FY1676</strain>
    </source>
</reference>
<reference key="2">
    <citation type="journal article" date="1996" name="Yeast">
        <authorList>
            <person name="Bergez P."/>
            <person name="Doignon F."/>
            <person name="Crouzet M."/>
        </authorList>
    </citation>
    <scope>ERRATUM OF PUBMED:8533472</scope>
</reference>
<reference key="3">
    <citation type="journal article" date="1997" name="Nature">
        <title>The nucleotide sequence of Saccharomyces cerevisiae chromosome XIV and its evolutionary implications.</title>
        <authorList>
            <person name="Philippsen P."/>
            <person name="Kleine K."/>
            <person name="Poehlmann R."/>
            <person name="Duesterhoeft A."/>
            <person name="Hamberg K."/>
            <person name="Hegemann J.H."/>
            <person name="Obermaier B."/>
            <person name="Urrestarazu L.A."/>
            <person name="Aert R."/>
            <person name="Albermann K."/>
            <person name="Altmann R."/>
            <person name="Andre B."/>
            <person name="Baladron V."/>
            <person name="Ballesta J.P.G."/>
            <person name="Becam A.-M."/>
            <person name="Beinhauer J.D."/>
            <person name="Boskovic J."/>
            <person name="Buitrago M.J."/>
            <person name="Bussereau F."/>
            <person name="Coster F."/>
            <person name="Crouzet M."/>
            <person name="D'Angelo M."/>
            <person name="Dal Pero F."/>
            <person name="De Antoni A."/>
            <person name="del Rey F."/>
            <person name="Doignon F."/>
            <person name="Domdey H."/>
            <person name="Dubois E."/>
            <person name="Fiedler T.A."/>
            <person name="Fleig U."/>
            <person name="Floeth M."/>
            <person name="Fritz C."/>
            <person name="Gaillardin C."/>
            <person name="Garcia-Cantalejo J.M."/>
            <person name="Glansdorff N."/>
            <person name="Goffeau A."/>
            <person name="Gueldener U."/>
            <person name="Herbert C.J."/>
            <person name="Heumann K."/>
            <person name="Heuss-Neitzel D."/>
            <person name="Hilbert H."/>
            <person name="Hinni K."/>
            <person name="Iraqui Houssaini I."/>
            <person name="Jacquet M."/>
            <person name="Jimenez A."/>
            <person name="Jonniaux J.-L."/>
            <person name="Karpfinger-Hartl L."/>
            <person name="Lanfranchi G."/>
            <person name="Lepingle A."/>
            <person name="Levesque H."/>
            <person name="Lyck R."/>
            <person name="Maftahi M."/>
            <person name="Mallet L."/>
            <person name="Maurer C.T.C."/>
            <person name="Messenguy F."/>
            <person name="Mewes H.-W."/>
            <person name="Moestl D."/>
            <person name="Nasr F."/>
            <person name="Nicaud J.-M."/>
            <person name="Niedenthal R.K."/>
            <person name="Pandolfo D."/>
            <person name="Pierard A."/>
            <person name="Piravandi E."/>
            <person name="Planta R.J."/>
            <person name="Pohl T.M."/>
            <person name="Purnelle B."/>
            <person name="Rebischung C."/>
            <person name="Remacha M.A."/>
            <person name="Revuelta J.L."/>
            <person name="Rinke M."/>
            <person name="Saiz J.E."/>
            <person name="Sartorello F."/>
            <person name="Scherens B."/>
            <person name="Sen-Gupta M."/>
            <person name="Soler-Mira A."/>
            <person name="Urbanus J.H.M."/>
            <person name="Valle G."/>
            <person name="Van Dyck L."/>
            <person name="Verhasselt P."/>
            <person name="Vierendeels F."/>
            <person name="Vissers S."/>
            <person name="Voet M."/>
            <person name="Volckaert G."/>
            <person name="Wach A."/>
            <person name="Wambutt R."/>
            <person name="Wedler H."/>
            <person name="Zollner A."/>
            <person name="Hani J."/>
        </authorList>
    </citation>
    <scope>NUCLEOTIDE SEQUENCE [LARGE SCALE GENOMIC DNA]</scope>
    <source>
        <strain>ATCC 204508 / S288c</strain>
    </source>
</reference>
<reference key="4">
    <citation type="journal article" date="2014" name="G3 (Bethesda)">
        <title>The reference genome sequence of Saccharomyces cerevisiae: Then and now.</title>
        <authorList>
            <person name="Engel S.R."/>
            <person name="Dietrich F.S."/>
            <person name="Fisk D.G."/>
            <person name="Binkley G."/>
            <person name="Balakrishnan R."/>
            <person name="Costanzo M.C."/>
            <person name="Dwight S.S."/>
            <person name="Hitz B.C."/>
            <person name="Karra K."/>
            <person name="Nash R.S."/>
            <person name="Weng S."/>
            <person name="Wong E.D."/>
            <person name="Lloyd P."/>
            <person name="Skrzypek M.S."/>
            <person name="Miyasato S.R."/>
            <person name="Simison M."/>
            <person name="Cherry J.M."/>
        </authorList>
    </citation>
    <scope>GENOME REANNOTATION</scope>
    <source>
        <strain>ATCC 204508 / S288c</strain>
    </source>
</reference>
<evidence type="ECO:0000305" key="1"/>
<evidence type="ECO:0000305" key="2">
    <source>
    </source>
</evidence>
<comment type="miscellaneous">
    <text evidence="1">Partially overlaps YNL058C.</text>
</comment>
<comment type="caution">
    <text evidence="2">Product of a dubious gene prediction unlikely to encode a functional protein. Because of that it is not part of the S.cerevisiae S288c complete/reference proteome set.</text>
</comment>
<dbReference type="EMBL" id="U12141">
    <property type="protein sequence ID" value="AAA99654.1"/>
    <property type="molecule type" value="Genomic_DNA"/>
</dbReference>
<dbReference type="EMBL" id="Z71334">
    <property type="protein sequence ID" value="CAA95931.1"/>
    <property type="molecule type" value="Genomic_DNA"/>
</dbReference>
<dbReference type="PIR" id="S58720">
    <property type="entry name" value="S58720"/>
</dbReference>
<dbReference type="PaxDb" id="4932-YNL057W"/>
<dbReference type="EnsemblFungi" id="YNL057W_mRNA">
    <property type="protein sequence ID" value="YNL057W"/>
    <property type="gene ID" value="YNL057W"/>
</dbReference>
<dbReference type="AGR" id="SGD:S000005002"/>
<dbReference type="SGD" id="S000005002">
    <property type="gene designation" value="YNL057W"/>
</dbReference>
<dbReference type="HOGENOM" id="CLU_2173011_0_0_1"/>
<protein>
    <recommendedName>
        <fullName>Putative uncharacterized protein YNL057W</fullName>
    </recommendedName>
</protein>
<accession>P53948</accession>
<sequence>MAPMTAPTAMYTVPFGLSAAFKINGFPAVDGGVILATISDEEDVAPLEVEKAEDVNDGRDLELVSDTTLDVGFDRAVELVVVVTKVGRSLLTSDTDGIKFFLTISADVSF</sequence>
<feature type="chain" id="PRO_0000203450" description="Putative uncharacterized protein YNL057W">
    <location>
        <begin position="1"/>
        <end position="110"/>
    </location>
</feature>
<proteinExistence type="uncertain"/>
<gene>
    <name type="ordered locus">YNL057W</name>
    <name type="ORF">N2436</name>
    <name type="ORF">YNL2436P</name>
</gene>
<name>YNF7_YEAST</name>